<organism>
    <name type="scientific">Tamias amoenus</name>
    <name type="common">Yellow-pine chipmunk</name>
    <name type="synonym">Neotamias amoenus</name>
    <dbReference type="NCBI Taxonomy" id="64679"/>
    <lineage>
        <taxon>Eukaryota</taxon>
        <taxon>Metazoa</taxon>
        <taxon>Chordata</taxon>
        <taxon>Craniata</taxon>
        <taxon>Vertebrata</taxon>
        <taxon>Euteleostomi</taxon>
        <taxon>Mammalia</taxon>
        <taxon>Eutheria</taxon>
        <taxon>Euarchontoglires</taxon>
        <taxon>Glires</taxon>
        <taxon>Rodentia</taxon>
        <taxon>Sciuromorpha</taxon>
        <taxon>Sciuridae</taxon>
        <taxon>Xerinae</taxon>
        <taxon>Marmotini</taxon>
        <taxon>Tamias</taxon>
    </lineage>
</organism>
<comment type="function">
    <text evidence="2">Component of the cytochrome c oxidase, the last enzyme in the mitochondrial electron transport chain which drives oxidative phosphorylation. The respiratory chain contains 3 multisubunit complexes succinate dehydrogenase (complex II, CII), ubiquinol-cytochrome c oxidoreductase (cytochrome b-c1 complex, complex III, CIII) and cytochrome c oxidase (complex IV, CIV), that cooperate to transfer electrons derived from NADH and succinate to molecular oxygen, creating an electrochemical gradient over the inner membrane that drives transmembrane transport and the ATP synthase. Cytochrome c oxidase is the component of the respiratory chain that catalyzes the reduction of oxygen to water. Electrons originating from reduced cytochrome c in the intermembrane space (IMS) are transferred via the dinuclear copper A center (CU(A)) of subunit 2 and heme A of subunit 1 to the active site in subunit 1, a binuclear center (BNC) formed by heme A3 and copper B (CU(B)). The BNC reduces molecular oxygen to 2 water molecules using 4 electrons from cytochrome c in the IMS and 4 protons from the mitochondrial matrix.</text>
</comment>
<comment type="catalytic activity">
    <reaction evidence="2">
        <text>4 Fe(II)-[cytochrome c] + O2 + 8 H(+)(in) = 4 Fe(III)-[cytochrome c] + 2 H2O + 4 H(+)(out)</text>
        <dbReference type="Rhea" id="RHEA:11436"/>
        <dbReference type="Rhea" id="RHEA-COMP:10350"/>
        <dbReference type="Rhea" id="RHEA-COMP:14399"/>
        <dbReference type="ChEBI" id="CHEBI:15377"/>
        <dbReference type="ChEBI" id="CHEBI:15378"/>
        <dbReference type="ChEBI" id="CHEBI:15379"/>
        <dbReference type="ChEBI" id="CHEBI:29033"/>
        <dbReference type="ChEBI" id="CHEBI:29034"/>
        <dbReference type="EC" id="7.1.1.9"/>
    </reaction>
    <physiologicalReaction direction="left-to-right" evidence="2">
        <dbReference type="Rhea" id="RHEA:11437"/>
    </physiologicalReaction>
</comment>
<comment type="cofactor">
    <cofactor evidence="3">
        <name>Cu cation</name>
        <dbReference type="ChEBI" id="CHEBI:23378"/>
    </cofactor>
    <text evidence="3">Binds a dinuclear copper A center per subunit.</text>
</comment>
<comment type="subunit">
    <text evidence="1 3">Component of the cytochrome c oxidase (complex IV, CIV), a multisubunit enzyme composed of 14 subunits. The complex is composed of a catalytic core of 3 subunits MT-CO1, MT-CO2 and MT-CO3, encoded in the mitochondrial DNA, and 11 supernumerary subunits COX4I, COX5A, COX5B, COX6A, COX6B, COX6C, COX7A, COX7B, COX7C, COX8 and NDUFA4, which are encoded in the nuclear genome. The complex exists as a monomer or a dimer and forms supercomplexes (SCs) in the inner mitochondrial membrane with NADH-ubiquinone oxidoreductase (complex I, CI) and ubiquinol-cytochrome c oxidoreductase (cytochrome b-c1 complex, complex III, CIII), resulting in different assemblies (supercomplex SCI(1)III(2)IV(1) and megacomplex MCI(2)III(2)IV(2)) (By similarity). Found in a complex with TMEM177, COA6, COX18, COX20, SCO1 and SCO2. Interacts with TMEM177 in a COX20-dependent manner. Interacts with COX20. Interacts with COX16 (By similarity).</text>
</comment>
<comment type="subcellular location">
    <subcellularLocation>
        <location evidence="3">Mitochondrion inner membrane</location>
        <topology evidence="3">Multi-pass membrane protein</topology>
    </subcellularLocation>
</comment>
<comment type="similarity">
    <text evidence="4">Belongs to the cytochrome c oxidase subunit 2 family.</text>
</comment>
<keyword id="KW-0186">Copper</keyword>
<keyword id="KW-0249">Electron transport</keyword>
<keyword id="KW-0460">Magnesium</keyword>
<keyword id="KW-0472">Membrane</keyword>
<keyword id="KW-0479">Metal-binding</keyword>
<keyword id="KW-0496">Mitochondrion</keyword>
<keyword id="KW-0999">Mitochondrion inner membrane</keyword>
<keyword id="KW-0679">Respiratory chain</keyword>
<keyword id="KW-1278">Translocase</keyword>
<keyword id="KW-0812">Transmembrane</keyword>
<keyword id="KW-1133">Transmembrane helix</keyword>
<keyword id="KW-0813">Transport</keyword>
<sequence>MAYPFELGFQDATSPIMEELLHFHDHTLMIVFLISSLVLYIISLMLTTKLTHTSTMDAQEVETIWTILPAIILILIALPSLRILYMMDEINDPSLTVKTMGHQWYWSYEYTDYEDLNFDSYMIPTSDLSPGELRLLEVDNRVVLPMELPIRMLISSEDVLHSWAVPSLGLKTDAIPGRLNQATLTSTRPGLYYGQCSEICGSNHSFMPIVLELVPLKHFENWSSSML</sequence>
<gene>
    <name type="primary">MT-CO2</name>
    <name type="synonym">COII</name>
    <name type="synonym">COX2</name>
    <name type="synonym">COXII</name>
    <name type="synonym">MTCO2</name>
</gene>
<protein>
    <recommendedName>
        <fullName>Cytochrome c oxidase subunit 2</fullName>
        <ecNumber>7.1.1.9</ecNumber>
    </recommendedName>
    <alternativeName>
        <fullName>Cytochrome c oxidase polypeptide II</fullName>
    </alternativeName>
</protein>
<feature type="chain" id="PRO_0000257852" description="Cytochrome c oxidase subunit 2">
    <location>
        <begin position="1"/>
        <end position="227"/>
    </location>
</feature>
<feature type="topological domain" description="Mitochondrial intermembrane" evidence="3">
    <location>
        <begin position="1"/>
        <end position="14"/>
    </location>
</feature>
<feature type="transmembrane region" description="Helical; Name=I" evidence="3">
    <location>
        <begin position="15"/>
        <end position="45"/>
    </location>
</feature>
<feature type="topological domain" description="Mitochondrial matrix" evidence="3">
    <location>
        <begin position="46"/>
        <end position="59"/>
    </location>
</feature>
<feature type="transmembrane region" description="Helical; Name=II" evidence="3">
    <location>
        <begin position="60"/>
        <end position="87"/>
    </location>
</feature>
<feature type="topological domain" description="Mitochondrial intermembrane" evidence="3">
    <location>
        <begin position="88"/>
        <end position="227"/>
    </location>
</feature>
<feature type="binding site" evidence="3">
    <location>
        <position position="161"/>
    </location>
    <ligand>
        <name>Cu cation</name>
        <dbReference type="ChEBI" id="CHEBI:23378"/>
        <label>A1</label>
    </ligand>
</feature>
<feature type="binding site" evidence="3">
    <location>
        <position position="196"/>
    </location>
    <ligand>
        <name>Cu cation</name>
        <dbReference type="ChEBI" id="CHEBI:23378"/>
        <label>A1</label>
    </ligand>
</feature>
<feature type="binding site" evidence="3">
    <location>
        <position position="196"/>
    </location>
    <ligand>
        <name>Cu cation</name>
        <dbReference type="ChEBI" id="CHEBI:23378"/>
        <label>A2</label>
    </ligand>
</feature>
<feature type="binding site" evidence="3">
    <location>
        <position position="198"/>
    </location>
    <ligand>
        <name>Cu cation</name>
        <dbReference type="ChEBI" id="CHEBI:23378"/>
        <label>A2</label>
    </ligand>
</feature>
<feature type="binding site" evidence="3">
    <location>
        <position position="198"/>
    </location>
    <ligand>
        <name>Mg(2+)</name>
        <dbReference type="ChEBI" id="CHEBI:18420"/>
        <note>ligand shared with MT-CO1</note>
    </ligand>
</feature>
<feature type="binding site" evidence="3">
    <location>
        <position position="200"/>
    </location>
    <ligand>
        <name>Cu cation</name>
        <dbReference type="ChEBI" id="CHEBI:23378"/>
        <label>A1</label>
    </ligand>
</feature>
<feature type="binding site" evidence="3">
    <location>
        <position position="200"/>
    </location>
    <ligand>
        <name>Cu cation</name>
        <dbReference type="ChEBI" id="CHEBI:23378"/>
        <label>A2</label>
    </ligand>
</feature>
<feature type="binding site" evidence="3">
    <location>
        <position position="204"/>
    </location>
    <ligand>
        <name>Cu cation</name>
        <dbReference type="ChEBI" id="CHEBI:23378"/>
        <label>A2</label>
    </ligand>
</feature>
<feature type="binding site" evidence="3">
    <location>
        <position position="207"/>
    </location>
    <ligand>
        <name>Cu cation</name>
        <dbReference type="ChEBI" id="CHEBI:23378"/>
        <label>A1</label>
    </ligand>
</feature>
<dbReference type="EC" id="7.1.1.9"/>
<dbReference type="EMBL" id="AF147583">
    <property type="protein sequence ID" value="AAG42576.1"/>
    <property type="molecule type" value="Genomic_DNA"/>
</dbReference>
<dbReference type="EMBL" id="AF147584">
    <property type="protein sequence ID" value="AAG42577.1"/>
    <property type="molecule type" value="Genomic_DNA"/>
</dbReference>
<dbReference type="EMBL" id="AF147585">
    <property type="protein sequence ID" value="AAG42578.1"/>
    <property type="molecule type" value="Genomic_DNA"/>
</dbReference>
<dbReference type="EMBL" id="AF147586">
    <property type="protein sequence ID" value="AAG42579.1"/>
    <property type="molecule type" value="Genomic_DNA"/>
</dbReference>
<dbReference type="EMBL" id="AF147587">
    <property type="protein sequence ID" value="AAG42580.1"/>
    <property type="molecule type" value="Genomic_DNA"/>
</dbReference>
<dbReference type="SMR" id="Q7IZ21"/>
<dbReference type="GO" id="GO:0005743">
    <property type="term" value="C:mitochondrial inner membrane"/>
    <property type="evidence" value="ECO:0007669"/>
    <property type="project" value="UniProtKB-SubCell"/>
</dbReference>
<dbReference type="GO" id="GO:0045277">
    <property type="term" value="C:respiratory chain complex IV"/>
    <property type="evidence" value="ECO:0000250"/>
    <property type="project" value="UniProtKB"/>
</dbReference>
<dbReference type="GO" id="GO:0005507">
    <property type="term" value="F:copper ion binding"/>
    <property type="evidence" value="ECO:0007669"/>
    <property type="project" value="InterPro"/>
</dbReference>
<dbReference type="GO" id="GO:0004129">
    <property type="term" value="F:cytochrome-c oxidase activity"/>
    <property type="evidence" value="ECO:0007669"/>
    <property type="project" value="UniProtKB-EC"/>
</dbReference>
<dbReference type="GO" id="GO:0042773">
    <property type="term" value="P:ATP synthesis coupled electron transport"/>
    <property type="evidence" value="ECO:0007669"/>
    <property type="project" value="TreeGrafter"/>
</dbReference>
<dbReference type="CDD" id="cd13912">
    <property type="entry name" value="CcO_II_C"/>
    <property type="match status" value="1"/>
</dbReference>
<dbReference type="FunFam" id="1.10.287.90:FF:000001">
    <property type="entry name" value="Cytochrome c oxidase subunit 2"/>
    <property type="match status" value="1"/>
</dbReference>
<dbReference type="FunFam" id="2.60.40.420:FF:000001">
    <property type="entry name" value="Cytochrome c oxidase subunit 2"/>
    <property type="match status" value="1"/>
</dbReference>
<dbReference type="Gene3D" id="1.10.287.90">
    <property type="match status" value="1"/>
</dbReference>
<dbReference type="Gene3D" id="2.60.40.420">
    <property type="entry name" value="Cupredoxins - blue copper proteins"/>
    <property type="match status" value="1"/>
</dbReference>
<dbReference type="InterPro" id="IPR045187">
    <property type="entry name" value="CcO_II"/>
</dbReference>
<dbReference type="InterPro" id="IPR002429">
    <property type="entry name" value="CcO_II-like_C"/>
</dbReference>
<dbReference type="InterPro" id="IPR034210">
    <property type="entry name" value="CcO_II_C"/>
</dbReference>
<dbReference type="InterPro" id="IPR001505">
    <property type="entry name" value="Copper_CuA"/>
</dbReference>
<dbReference type="InterPro" id="IPR008972">
    <property type="entry name" value="Cupredoxin"/>
</dbReference>
<dbReference type="InterPro" id="IPR014222">
    <property type="entry name" value="Cyt_c_oxidase_su2"/>
</dbReference>
<dbReference type="InterPro" id="IPR011759">
    <property type="entry name" value="Cyt_c_oxidase_su2_TM_dom"/>
</dbReference>
<dbReference type="InterPro" id="IPR036257">
    <property type="entry name" value="Cyt_c_oxidase_su2_TM_sf"/>
</dbReference>
<dbReference type="NCBIfam" id="TIGR02866">
    <property type="entry name" value="CoxB"/>
    <property type="match status" value="1"/>
</dbReference>
<dbReference type="PANTHER" id="PTHR22888:SF9">
    <property type="entry name" value="CYTOCHROME C OXIDASE SUBUNIT 2"/>
    <property type="match status" value="1"/>
</dbReference>
<dbReference type="PANTHER" id="PTHR22888">
    <property type="entry name" value="CYTOCHROME C OXIDASE, SUBUNIT II"/>
    <property type="match status" value="1"/>
</dbReference>
<dbReference type="Pfam" id="PF00116">
    <property type="entry name" value="COX2"/>
    <property type="match status" value="1"/>
</dbReference>
<dbReference type="Pfam" id="PF02790">
    <property type="entry name" value="COX2_TM"/>
    <property type="match status" value="1"/>
</dbReference>
<dbReference type="PRINTS" id="PR01166">
    <property type="entry name" value="CYCOXIDASEII"/>
</dbReference>
<dbReference type="SUPFAM" id="SSF49503">
    <property type="entry name" value="Cupredoxins"/>
    <property type="match status" value="1"/>
</dbReference>
<dbReference type="SUPFAM" id="SSF81464">
    <property type="entry name" value="Cytochrome c oxidase subunit II-like, transmembrane region"/>
    <property type="match status" value="1"/>
</dbReference>
<dbReference type="PROSITE" id="PS00078">
    <property type="entry name" value="COX2"/>
    <property type="match status" value="1"/>
</dbReference>
<dbReference type="PROSITE" id="PS50857">
    <property type="entry name" value="COX2_CUA"/>
    <property type="match status" value="1"/>
</dbReference>
<dbReference type="PROSITE" id="PS50999">
    <property type="entry name" value="COX2_TM"/>
    <property type="match status" value="1"/>
</dbReference>
<name>COX2_TAMAM</name>
<geneLocation type="mitochondrion"/>
<evidence type="ECO:0000250" key="1">
    <source>
        <dbReference type="UniProtKB" id="P00403"/>
    </source>
</evidence>
<evidence type="ECO:0000250" key="2">
    <source>
        <dbReference type="UniProtKB" id="P00410"/>
    </source>
</evidence>
<evidence type="ECO:0000250" key="3">
    <source>
        <dbReference type="UniProtKB" id="P68530"/>
    </source>
</evidence>
<evidence type="ECO:0000305" key="4"/>
<proteinExistence type="inferred from homology"/>
<accession>Q7IZ21</accession>
<reference key="1">
    <citation type="journal article" date="2000" name="J. Mammal. Evol.">
        <title>Molecular phylogeny of the chipmunk genus Tamias based on the mitochondrial cytochrome oxidase subunit II gene.</title>
        <authorList>
            <person name="Piaggio A.J."/>
            <person name="Spicer G.S."/>
        </authorList>
    </citation>
    <scope>NUCLEOTIDE SEQUENCE [GENOMIC DNA]</scope>
</reference>